<dbReference type="EMBL" id="AL009126">
    <property type="protein sequence ID" value="CAB13663.1"/>
    <property type="molecule type" value="Genomic_DNA"/>
</dbReference>
<dbReference type="PIR" id="H69889">
    <property type="entry name" value="H69889"/>
</dbReference>
<dbReference type="RefSeq" id="NP_389662.1">
    <property type="nucleotide sequence ID" value="NC_000964.3"/>
</dbReference>
<dbReference type="RefSeq" id="WP_003244960.1">
    <property type="nucleotide sequence ID" value="NZ_OZ025638.1"/>
</dbReference>
<dbReference type="FunCoup" id="O31812">
    <property type="interactions" value="10"/>
</dbReference>
<dbReference type="STRING" id="224308.BSU17790"/>
<dbReference type="PaxDb" id="224308-BSU17790"/>
<dbReference type="EnsemblBacteria" id="CAB13663">
    <property type="protein sequence ID" value="CAB13663"/>
    <property type="gene ID" value="BSU_17790"/>
</dbReference>
<dbReference type="GeneID" id="939537"/>
<dbReference type="KEGG" id="bsu:BSU17790"/>
<dbReference type="PATRIC" id="fig|224308.179.peg.1939"/>
<dbReference type="eggNOG" id="ENOG502ZG4P">
    <property type="taxonomic scope" value="Bacteria"/>
</dbReference>
<dbReference type="InParanoid" id="O31812"/>
<dbReference type="OrthoDB" id="2448833at2"/>
<dbReference type="BioCyc" id="BSUB:BSU17790-MONOMER"/>
<dbReference type="Proteomes" id="UP000001570">
    <property type="component" value="Chromosome"/>
</dbReference>
<dbReference type="InterPro" id="IPR025311">
    <property type="entry name" value="DUF4166"/>
</dbReference>
<dbReference type="Pfam" id="PF13761">
    <property type="entry name" value="DUF4166"/>
    <property type="match status" value="1"/>
</dbReference>
<feature type="chain" id="PRO_0000360630" description="Uncharacterized protein YndH">
    <location>
        <begin position="1"/>
        <end position="205"/>
    </location>
</feature>
<keyword id="KW-1185">Reference proteome</keyword>
<proteinExistence type="predicted"/>
<sequence length="205" mass="23812">MSSIYEKSIINYHLLHPKLQKRYQLDGSHTFSGTGTMSEISGGSFLVRMLLKLGVFFRCFFSERGKDIPFTIQNRTCLLKSQHTGIEWNRTFFFKGKKRFFDALMIYDEKENRILDFFGKPHLLLSVLTFEASLDGSLTITSGKQWLLICGKRIPLPKWLTGTSEVCETFDEKKNCFTIEVHVQNTILGTLFFYKGTFQEEERES</sequence>
<accession>O31812</accession>
<reference key="1">
    <citation type="journal article" date="1997" name="Nature">
        <title>The complete genome sequence of the Gram-positive bacterium Bacillus subtilis.</title>
        <authorList>
            <person name="Kunst F."/>
            <person name="Ogasawara N."/>
            <person name="Moszer I."/>
            <person name="Albertini A.M."/>
            <person name="Alloni G."/>
            <person name="Azevedo V."/>
            <person name="Bertero M.G."/>
            <person name="Bessieres P."/>
            <person name="Bolotin A."/>
            <person name="Borchert S."/>
            <person name="Borriss R."/>
            <person name="Boursier L."/>
            <person name="Brans A."/>
            <person name="Braun M."/>
            <person name="Brignell S.C."/>
            <person name="Bron S."/>
            <person name="Brouillet S."/>
            <person name="Bruschi C.V."/>
            <person name="Caldwell B."/>
            <person name="Capuano V."/>
            <person name="Carter N.M."/>
            <person name="Choi S.-K."/>
            <person name="Codani J.-J."/>
            <person name="Connerton I.F."/>
            <person name="Cummings N.J."/>
            <person name="Daniel R.A."/>
            <person name="Denizot F."/>
            <person name="Devine K.M."/>
            <person name="Duesterhoeft A."/>
            <person name="Ehrlich S.D."/>
            <person name="Emmerson P.T."/>
            <person name="Entian K.-D."/>
            <person name="Errington J."/>
            <person name="Fabret C."/>
            <person name="Ferrari E."/>
            <person name="Foulger D."/>
            <person name="Fritz C."/>
            <person name="Fujita M."/>
            <person name="Fujita Y."/>
            <person name="Fuma S."/>
            <person name="Galizzi A."/>
            <person name="Galleron N."/>
            <person name="Ghim S.-Y."/>
            <person name="Glaser P."/>
            <person name="Goffeau A."/>
            <person name="Golightly E.J."/>
            <person name="Grandi G."/>
            <person name="Guiseppi G."/>
            <person name="Guy B.J."/>
            <person name="Haga K."/>
            <person name="Haiech J."/>
            <person name="Harwood C.R."/>
            <person name="Henaut A."/>
            <person name="Hilbert H."/>
            <person name="Holsappel S."/>
            <person name="Hosono S."/>
            <person name="Hullo M.-F."/>
            <person name="Itaya M."/>
            <person name="Jones L.-M."/>
            <person name="Joris B."/>
            <person name="Karamata D."/>
            <person name="Kasahara Y."/>
            <person name="Klaerr-Blanchard M."/>
            <person name="Klein C."/>
            <person name="Kobayashi Y."/>
            <person name="Koetter P."/>
            <person name="Koningstein G."/>
            <person name="Krogh S."/>
            <person name="Kumano M."/>
            <person name="Kurita K."/>
            <person name="Lapidus A."/>
            <person name="Lardinois S."/>
            <person name="Lauber J."/>
            <person name="Lazarevic V."/>
            <person name="Lee S.-M."/>
            <person name="Levine A."/>
            <person name="Liu H."/>
            <person name="Masuda S."/>
            <person name="Mauel C."/>
            <person name="Medigue C."/>
            <person name="Medina N."/>
            <person name="Mellado R.P."/>
            <person name="Mizuno M."/>
            <person name="Moestl D."/>
            <person name="Nakai S."/>
            <person name="Noback M."/>
            <person name="Noone D."/>
            <person name="O'Reilly M."/>
            <person name="Ogawa K."/>
            <person name="Ogiwara A."/>
            <person name="Oudega B."/>
            <person name="Park S.-H."/>
            <person name="Parro V."/>
            <person name="Pohl T.M."/>
            <person name="Portetelle D."/>
            <person name="Porwollik S."/>
            <person name="Prescott A.M."/>
            <person name="Presecan E."/>
            <person name="Pujic P."/>
            <person name="Purnelle B."/>
            <person name="Rapoport G."/>
            <person name="Rey M."/>
            <person name="Reynolds S."/>
            <person name="Rieger M."/>
            <person name="Rivolta C."/>
            <person name="Rocha E."/>
            <person name="Roche B."/>
            <person name="Rose M."/>
            <person name="Sadaie Y."/>
            <person name="Sato T."/>
            <person name="Scanlan E."/>
            <person name="Schleich S."/>
            <person name="Schroeter R."/>
            <person name="Scoffone F."/>
            <person name="Sekiguchi J."/>
            <person name="Sekowska A."/>
            <person name="Seror S.J."/>
            <person name="Serror P."/>
            <person name="Shin B.-S."/>
            <person name="Soldo B."/>
            <person name="Sorokin A."/>
            <person name="Tacconi E."/>
            <person name="Takagi T."/>
            <person name="Takahashi H."/>
            <person name="Takemaru K."/>
            <person name="Takeuchi M."/>
            <person name="Tamakoshi A."/>
            <person name="Tanaka T."/>
            <person name="Terpstra P."/>
            <person name="Tognoni A."/>
            <person name="Tosato V."/>
            <person name="Uchiyama S."/>
            <person name="Vandenbol M."/>
            <person name="Vannier F."/>
            <person name="Vassarotti A."/>
            <person name="Viari A."/>
            <person name="Wambutt R."/>
            <person name="Wedler E."/>
            <person name="Wedler H."/>
            <person name="Weitzenegger T."/>
            <person name="Winters P."/>
            <person name="Wipat A."/>
            <person name="Yamamoto H."/>
            <person name="Yamane K."/>
            <person name="Yasumoto K."/>
            <person name="Yata K."/>
            <person name="Yoshida K."/>
            <person name="Yoshikawa H.-F."/>
            <person name="Zumstein E."/>
            <person name="Yoshikawa H."/>
            <person name="Danchin A."/>
        </authorList>
    </citation>
    <scope>NUCLEOTIDE SEQUENCE [LARGE SCALE GENOMIC DNA]</scope>
    <source>
        <strain>168</strain>
    </source>
</reference>
<protein>
    <recommendedName>
        <fullName>Uncharacterized protein YndH</fullName>
    </recommendedName>
</protein>
<organism>
    <name type="scientific">Bacillus subtilis (strain 168)</name>
    <dbReference type="NCBI Taxonomy" id="224308"/>
    <lineage>
        <taxon>Bacteria</taxon>
        <taxon>Bacillati</taxon>
        <taxon>Bacillota</taxon>
        <taxon>Bacilli</taxon>
        <taxon>Bacillales</taxon>
        <taxon>Bacillaceae</taxon>
        <taxon>Bacillus</taxon>
    </lineage>
</organism>
<gene>
    <name type="primary">yndH</name>
    <name type="ordered locus">BSU17790</name>
</gene>
<name>YNDH_BACSU</name>